<gene>
    <name evidence="1" type="primary">rplK</name>
    <name type="ordered locus">Ctha_1174</name>
</gene>
<protein>
    <recommendedName>
        <fullName evidence="1">Large ribosomal subunit protein uL11</fullName>
    </recommendedName>
    <alternativeName>
        <fullName evidence="2">50S ribosomal protein L11</fullName>
    </alternativeName>
</protein>
<dbReference type="EMBL" id="CP001100">
    <property type="protein sequence ID" value="ACF13638.1"/>
    <property type="molecule type" value="Genomic_DNA"/>
</dbReference>
<dbReference type="RefSeq" id="WP_012499722.1">
    <property type="nucleotide sequence ID" value="NC_011026.1"/>
</dbReference>
<dbReference type="SMR" id="B3QYL0"/>
<dbReference type="STRING" id="517418.Ctha_1174"/>
<dbReference type="KEGG" id="cts:Ctha_1174"/>
<dbReference type="eggNOG" id="COG0080">
    <property type="taxonomic scope" value="Bacteria"/>
</dbReference>
<dbReference type="HOGENOM" id="CLU_074237_2_1_10"/>
<dbReference type="OrthoDB" id="9802408at2"/>
<dbReference type="Proteomes" id="UP000001208">
    <property type="component" value="Chromosome"/>
</dbReference>
<dbReference type="GO" id="GO:0022625">
    <property type="term" value="C:cytosolic large ribosomal subunit"/>
    <property type="evidence" value="ECO:0007669"/>
    <property type="project" value="TreeGrafter"/>
</dbReference>
<dbReference type="GO" id="GO:0070180">
    <property type="term" value="F:large ribosomal subunit rRNA binding"/>
    <property type="evidence" value="ECO:0007669"/>
    <property type="project" value="UniProtKB-UniRule"/>
</dbReference>
<dbReference type="GO" id="GO:0003735">
    <property type="term" value="F:structural constituent of ribosome"/>
    <property type="evidence" value="ECO:0007669"/>
    <property type="project" value="InterPro"/>
</dbReference>
<dbReference type="GO" id="GO:0006412">
    <property type="term" value="P:translation"/>
    <property type="evidence" value="ECO:0007669"/>
    <property type="project" value="UniProtKB-UniRule"/>
</dbReference>
<dbReference type="CDD" id="cd00349">
    <property type="entry name" value="Ribosomal_L11"/>
    <property type="match status" value="1"/>
</dbReference>
<dbReference type="FunFam" id="1.10.10.250:FF:000001">
    <property type="entry name" value="50S ribosomal protein L11"/>
    <property type="match status" value="1"/>
</dbReference>
<dbReference type="FunFam" id="3.30.1550.10:FF:000001">
    <property type="entry name" value="50S ribosomal protein L11"/>
    <property type="match status" value="1"/>
</dbReference>
<dbReference type="Gene3D" id="1.10.10.250">
    <property type="entry name" value="Ribosomal protein L11, C-terminal domain"/>
    <property type="match status" value="1"/>
</dbReference>
<dbReference type="Gene3D" id="3.30.1550.10">
    <property type="entry name" value="Ribosomal protein L11/L12, N-terminal domain"/>
    <property type="match status" value="1"/>
</dbReference>
<dbReference type="HAMAP" id="MF_00736">
    <property type="entry name" value="Ribosomal_uL11"/>
    <property type="match status" value="1"/>
</dbReference>
<dbReference type="InterPro" id="IPR000911">
    <property type="entry name" value="Ribosomal_uL11"/>
</dbReference>
<dbReference type="InterPro" id="IPR006519">
    <property type="entry name" value="Ribosomal_uL11_bac-typ"/>
</dbReference>
<dbReference type="InterPro" id="IPR020783">
    <property type="entry name" value="Ribosomal_uL11_C"/>
</dbReference>
<dbReference type="InterPro" id="IPR036769">
    <property type="entry name" value="Ribosomal_uL11_C_sf"/>
</dbReference>
<dbReference type="InterPro" id="IPR020785">
    <property type="entry name" value="Ribosomal_uL11_CS"/>
</dbReference>
<dbReference type="InterPro" id="IPR020784">
    <property type="entry name" value="Ribosomal_uL11_N"/>
</dbReference>
<dbReference type="InterPro" id="IPR036796">
    <property type="entry name" value="Ribosomal_uL11_N_sf"/>
</dbReference>
<dbReference type="NCBIfam" id="TIGR01632">
    <property type="entry name" value="L11_bact"/>
    <property type="match status" value="1"/>
</dbReference>
<dbReference type="PANTHER" id="PTHR11661">
    <property type="entry name" value="60S RIBOSOMAL PROTEIN L12"/>
    <property type="match status" value="1"/>
</dbReference>
<dbReference type="PANTHER" id="PTHR11661:SF1">
    <property type="entry name" value="LARGE RIBOSOMAL SUBUNIT PROTEIN UL11M"/>
    <property type="match status" value="1"/>
</dbReference>
<dbReference type="Pfam" id="PF00298">
    <property type="entry name" value="Ribosomal_L11"/>
    <property type="match status" value="1"/>
</dbReference>
<dbReference type="Pfam" id="PF03946">
    <property type="entry name" value="Ribosomal_L11_N"/>
    <property type="match status" value="1"/>
</dbReference>
<dbReference type="SMART" id="SM00649">
    <property type="entry name" value="RL11"/>
    <property type="match status" value="1"/>
</dbReference>
<dbReference type="SUPFAM" id="SSF54747">
    <property type="entry name" value="Ribosomal L11/L12e N-terminal domain"/>
    <property type="match status" value="1"/>
</dbReference>
<dbReference type="SUPFAM" id="SSF46906">
    <property type="entry name" value="Ribosomal protein L11, C-terminal domain"/>
    <property type="match status" value="1"/>
</dbReference>
<dbReference type="PROSITE" id="PS00359">
    <property type="entry name" value="RIBOSOMAL_L11"/>
    <property type="match status" value="1"/>
</dbReference>
<feature type="chain" id="PRO_1000195599" description="Large ribosomal subunit protein uL11">
    <location>
        <begin position="1"/>
        <end position="141"/>
    </location>
</feature>
<sequence>MAKKIVGYIKLQIPAGGANPAPPVGPALGQKGVNIMEFCKQFNAKTQPQAGMIIPVVITVFSDKSFTFVTKTPPASILLIKEAKLQKGSSEPNRNKVGKVTKEQVRKIAELKMPDLNANTVEAAERMVEGTARSMGITIEG</sequence>
<keyword id="KW-0488">Methylation</keyword>
<keyword id="KW-1185">Reference proteome</keyword>
<keyword id="KW-0687">Ribonucleoprotein</keyword>
<keyword id="KW-0689">Ribosomal protein</keyword>
<keyword id="KW-0694">RNA-binding</keyword>
<keyword id="KW-0699">rRNA-binding</keyword>
<evidence type="ECO:0000255" key="1">
    <source>
        <dbReference type="HAMAP-Rule" id="MF_00736"/>
    </source>
</evidence>
<evidence type="ECO:0000305" key="2"/>
<comment type="function">
    <text evidence="1">Forms part of the ribosomal stalk which helps the ribosome interact with GTP-bound translation factors.</text>
</comment>
<comment type="subunit">
    <text evidence="1">Part of the ribosomal stalk of the 50S ribosomal subunit. Interacts with L10 and the large rRNA to form the base of the stalk. L10 forms an elongated spine to which L12 dimers bind in a sequential fashion forming a multimeric L10(L12)X complex.</text>
</comment>
<comment type="PTM">
    <text evidence="1">One or more lysine residues are methylated.</text>
</comment>
<comment type="similarity">
    <text evidence="1">Belongs to the universal ribosomal protein uL11 family.</text>
</comment>
<proteinExistence type="inferred from homology"/>
<name>RL11_CHLT3</name>
<reference key="1">
    <citation type="submission" date="2008-06" db="EMBL/GenBank/DDBJ databases">
        <title>Complete sequence of Chloroherpeton thalassium ATCC 35110.</title>
        <authorList>
            <consortium name="US DOE Joint Genome Institute"/>
            <person name="Lucas S."/>
            <person name="Copeland A."/>
            <person name="Lapidus A."/>
            <person name="Glavina del Rio T."/>
            <person name="Dalin E."/>
            <person name="Tice H."/>
            <person name="Bruce D."/>
            <person name="Goodwin L."/>
            <person name="Pitluck S."/>
            <person name="Schmutz J."/>
            <person name="Larimer F."/>
            <person name="Land M."/>
            <person name="Hauser L."/>
            <person name="Kyrpides N."/>
            <person name="Mikhailova N."/>
            <person name="Liu Z."/>
            <person name="Li T."/>
            <person name="Zhao F."/>
            <person name="Overmann J."/>
            <person name="Bryant D.A."/>
            <person name="Richardson P."/>
        </authorList>
    </citation>
    <scope>NUCLEOTIDE SEQUENCE [LARGE SCALE GENOMIC DNA]</scope>
    <source>
        <strain>ATCC 35110 / GB-78</strain>
    </source>
</reference>
<accession>B3QYL0</accession>
<organism>
    <name type="scientific">Chloroherpeton thalassium (strain ATCC 35110 / GB-78)</name>
    <dbReference type="NCBI Taxonomy" id="517418"/>
    <lineage>
        <taxon>Bacteria</taxon>
        <taxon>Pseudomonadati</taxon>
        <taxon>Chlorobiota</taxon>
        <taxon>Chlorobiia</taxon>
        <taxon>Chlorobiales</taxon>
        <taxon>Chloroherpetonaceae</taxon>
        <taxon>Chloroherpeton</taxon>
    </lineage>
</organism>